<reference key="1">
    <citation type="journal article" date="2004" name="Nucleic Acids Res.">
        <title>Thermoadaptation trait revealed by the genome sequence of thermophilic Geobacillus kaustophilus.</title>
        <authorList>
            <person name="Takami H."/>
            <person name="Takaki Y."/>
            <person name="Chee G.-J."/>
            <person name="Nishi S."/>
            <person name="Shimamura S."/>
            <person name="Suzuki H."/>
            <person name="Matsui S."/>
            <person name="Uchiyama I."/>
        </authorList>
    </citation>
    <scope>NUCLEOTIDE SEQUENCE [LARGE SCALE GENOMIC DNA]</scope>
    <source>
        <strain>HTA426</strain>
    </source>
</reference>
<protein>
    <recommendedName>
        <fullName evidence="1">Phenylalanine--tRNA ligase alpha subunit</fullName>
        <ecNumber evidence="1">6.1.1.20</ecNumber>
    </recommendedName>
    <alternativeName>
        <fullName evidence="1">Phenylalanyl-tRNA synthetase alpha subunit</fullName>
        <shortName evidence="1">PheRS</shortName>
    </alternativeName>
</protein>
<gene>
    <name evidence="1" type="primary">pheS</name>
    <name type="ordered locus">GK2707</name>
</gene>
<accession>Q5KWE4</accession>
<proteinExistence type="inferred from homology"/>
<comment type="catalytic activity">
    <reaction evidence="1">
        <text>tRNA(Phe) + L-phenylalanine + ATP = L-phenylalanyl-tRNA(Phe) + AMP + diphosphate + H(+)</text>
        <dbReference type="Rhea" id="RHEA:19413"/>
        <dbReference type="Rhea" id="RHEA-COMP:9668"/>
        <dbReference type="Rhea" id="RHEA-COMP:9699"/>
        <dbReference type="ChEBI" id="CHEBI:15378"/>
        <dbReference type="ChEBI" id="CHEBI:30616"/>
        <dbReference type="ChEBI" id="CHEBI:33019"/>
        <dbReference type="ChEBI" id="CHEBI:58095"/>
        <dbReference type="ChEBI" id="CHEBI:78442"/>
        <dbReference type="ChEBI" id="CHEBI:78531"/>
        <dbReference type="ChEBI" id="CHEBI:456215"/>
        <dbReference type="EC" id="6.1.1.20"/>
    </reaction>
</comment>
<comment type="cofactor">
    <cofactor evidence="1">
        <name>Mg(2+)</name>
        <dbReference type="ChEBI" id="CHEBI:18420"/>
    </cofactor>
    <text evidence="1">Binds 2 magnesium ions per tetramer.</text>
</comment>
<comment type="subunit">
    <text evidence="1">Tetramer of two alpha and two beta subunits.</text>
</comment>
<comment type="subcellular location">
    <subcellularLocation>
        <location evidence="1">Cytoplasm</location>
    </subcellularLocation>
</comment>
<comment type="similarity">
    <text evidence="1">Belongs to the class-II aminoacyl-tRNA synthetase family. Phe-tRNA synthetase alpha subunit type 1 subfamily.</text>
</comment>
<dbReference type="EC" id="6.1.1.20" evidence="1"/>
<dbReference type="EMBL" id="BA000043">
    <property type="protein sequence ID" value="BAD76992.1"/>
    <property type="molecule type" value="Genomic_DNA"/>
</dbReference>
<dbReference type="RefSeq" id="WP_011232181.1">
    <property type="nucleotide sequence ID" value="NC_006510.1"/>
</dbReference>
<dbReference type="SMR" id="Q5KWE4"/>
<dbReference type="STRING" id="235909.GK2707"/>
<dbReference type="KEGG" id="gka:GK2707"/>
<dbReference type="eggNOG" id="COG0016">
    <property type="taxonomic scope" value="Bacteria"/>
</dbReference>
<dbReference type="HOGENOM" id="CLU_025086_0_1_9"/>
<dbReference type="Proteomes" id="UP000001172">
    <property type="component" value="Chromosome"/>
</dbReference>
<dbReference type="GO" id="GO:0005737">
    <property type="term" value="C:cytoplasm"/>
    <property type="evidence" value="ECO:0007669"/>
    <property type="project" value="UniProtKB-SubCell"/>
</dbReference>
<dbReference type="GO" id="GO:0005524">
    <property type="term" value="F:ATP binding"/>
    <property type="evidence" value="ECO:0007669"/>
    <property type="project" value="UniProtKB-UniRule"/>
</dbReference>
<dbReference type="GO" id="GO:0140096">
    <property type="term" value="F:catalytic activity, acting on a protein"/>
    <property type="evidence" value="ECO:0007669"/>
    <property type="project" value="UniProtKB-ARBA"/>
</dbReference>
<dbReference type="GO" id="GO:0000287">
    <property type="term" value="F:magnesium ion binding"/>
    <property type="evidence" value="ECO:0007669"/>
    <property type="project" value="UniProtKB-UniRule"/>
</dbReference>
<dbReference type="GO" id="GO:0004826">
    <property type="term" value="F:phenylalanine-tRNA ligase activity"/>
    <property type="evidence" value="ECO:0007669"/>
    <property type="project" value="UniProtKB-UniRule"/>
</dbReference>
<dbReference type="GO" id="GO:0016740">
    <property type="term" value="F:transferase activity"/>
    <property type="evidence" value="ECO:0007669"/>
    <property type="project" value="UniProtKB-ARBA"/>
</dbReference>
<dbReference type="GO" id="GO:0000049">
    <property type="term" value="F:tRNA binding"/>
    <property type="evidence" value="ECO:0007669"/>
    <property type="project" value="InterPro"/>
</dbReference>
<dbReference type="GO" id="GO:0006432">
    <property type="term" value="P:phenylalanyl-tRNA aminoacylation"/>
    <property type="evidence" value="ECO:0007669"/>
    <property type="project" value="UniProtKB-UniRule"/>
</dbReference>
<dbReference type="CDD" id="cd00496">
    <property type="entry name" value="PheRS_alpha_core"/>
    <property type="match status" value="1"/>
</dbReference>
<dbReference type="FunFam" id="3.30.930.10:FF:000003">
    <property type="entry name" value="Phenylalanine--tRNA ligase alpha subunit"/>
    <property type="match status" value="1"/>
</dbReference>
<dbReference type="Gene3D" id="3.30.930.10">
    <property type="entry name" value="Bira Bifunctional Protein, Domain 2"/>
    <property type="match status" value="1"/>
</dbReference>
<dbReference type="HAMAP" id="MF_00281">
    <property type="entry name" value="Phe_tRNA_synth_alpha1"/>
    <property type="match status" value="1"/>
</dbReference>
<dbReference type="InterPro" id="IPR006195">
    <property type="entry name" value="aa-tRNA-synth_II"/>
</dbReference>
<dbReference type="InterPro" id="IPR045864">
    <property type="entry name" value="aa-tRNA-synth_II/BPL/LPL"/>
</dbReference>
<dbReference type="InterPro" id="IPR004529">
    <property type="entry name" value="Phe-tRNA-synth_IIc_asu"/>
</dbReference>
<dbReference type="InterPro" id="IPR004188">
    <property type="entry name" value="Phe-tRNA_ligase_II_N"/>
</dbReference>
<dbReference type="InterPro" id="IPR022911">
    <property type="entry name" value="Phe_tRNA_ligase_alpha1_bac"/>
</dbReference>
<dbReference type="InterPro" id="IPR002319">
    <property type="entry name" value="Phenylalanyl-tRNA_Synthase"/>
</dbReference>
<dbReference type="InterPro" id="IPR010978">
    <property type="entry name" value="tRNA-bd_arm"/>
</dbReference>
<dbReference type="NCBIfam" id="TIGR00468">
    <property type="entry name" value="pheS"/>
    <property type="match status" value="1"/>
</dbReference>
<dbReference type="PANTHER" id="PTHR11538:SF41">
    <property type="entry name" value="PHENYLALANINE--TRNA LIGASE, MITOCHONDRIAL"/>
    <property type="match status" value="1"/>
</dbReference>
<dbReference type="PANTHER" id="PTHR11538">
    <property type="entry name" value="PHENYLALANYL-TRNA SYNTHETASE"/>
    <property type="match status" value="1"/>
</dbReference>
<dbReference type="Pfam" id="PF02912">
    <property type="entry name" value="Phe_tRNA-synt_N"/>
    <property type="match status" value="1"/>
</dbReference>
<dbReference type="Pfam" id="PF01409">
    <property type="entry name" value="tRNA-synt_2d"/>
    <property type="match status" value="1"/>
</dbReference>
<dbReference type="SUPFAM" id="SSF55681">
    <property type="entry name" value="Class II aaRS and biotin synthetases"/>
    <property type="match status" value="1"/>
</dbReference>
<dbReference type="SUPFAM" id="SSF46589">
    <property type="entry name" value="tRNA-binding arm"/>
    <property type="match status" value="1"/>
</dbReference>
<dbReference type="PROSITE" id="PS50862">
    <property type="entry name" value="AA_TRNA_LIGASE_II"/>
    <property type="match status" value="1"/>
</dbReference>
<organism>
    <name type="scientific">Geobacillus kaustophilus (strain HTA426)</name>
    <dbReference type="NCBI Taxonomy" id="235909"/>
    <lineage>
        <taxon>Bacteria</taxon>
        <taxon>Bacillati</taxon>
        <taxon>Bacillota</taxon>
        <taxon>Bacilli</taxon>
        <taxon>Bacillales</taxon>
        <taxon>Anoxybacillaceae</taxon>
        <taxon>Geobacillus</taxon>
        <taxon>Geobacillus thermoleovorans group</taxon>
    </lineage>
</organism>
<feature type="chain" id="PRO_0000126708" description="Phenylalanine--tRNA ligase alpha subunit">
    <location>
        <begin position="1"/>
        <end position="344"/>
    </location>
</feature>
<feature type="binding site" evidence="1">
    <location>
        <position position="256"/>
    </location>
    <ligand>
        <name>Mg(2+)</name>
        <dbReference type="ChEBI" id="CHEBI:18420"/>
        <note>shared with beta subunit</note>
    </ligand>
</feature>
<name>SYFA_GEOKA</name>
<keyword id="KW-0030">Aminoacyl-tRNA synthetase</keyword>
<keyword id="KW-0067">ATP-binding</keyword>
<keyword id="KW-0963">Cytoplasm</keyword>
<keyword id="KW-0436">Ligase</keyword>
<keyword id="KW-0460">Magnesium</keyword>
<keyword id="KW-0479">Metal-binding</keyword>
<keyword id="KW-0547">Nucleotide-binding</keyword>
<keyword id="KW-0648">Protein biosynthesis</keyword>
<keyword id="KW-1185">Reference proteome</keyword>
<evidence type="ECO:0000255" key="1">
    <source>
        <dbReference type="HAMAP-Rule" id="MF_00281"/>
    </source>
</evidence>
<sequence>MKERLYELKRQALEQIGQARDLKALNDVRVAYLGKKGPITEVLRGMGALPPEERPKIGALANEVREAIQQALEAKQAKLEQEEVERKLAAEAIDVTLPGRPVSLGNPHPLTRVIEEIEDLFIGMGYTVAEGPEVETDYYNFEALNLPKGHPARDMQDSFYITEEILLRTHTSPMQARTMEKHRGRGPVKIICPGKVYRRDTDDATHSHQFTQIEGLVVDRNIRMSDLKGTLREFARKLFGEGRDIRFRPSFFPFTEPSVEVDVSCFRCEGRGCGVCKGTGWIEILGAGMVHPNVLEMAGFDSKTYTGFAFGMGPERIAMLKYGIDDIRHFYQNDLRFLRQFLRV</sequence>